<keyword id="KW-0012">Acyltransferase</keyword>
<keyword id="KW-0028">Amino-acid biosynthesis</keyword>
<keyword id="KW-0055">Arginine biosynthesis</keyword>
<keyword id="KW-0068">Autocatalytic cleavage</keyword>
<keyword id="KW-0963">Cytoplasm</keyword>
<keyword id="KW-0511">Multifunctional enzyme</keyword>
<keyword id="KW-0808">Transferase</keyword>
<comment type="function">
    <text evidence="1">Catalyzes two activities which are involved in the cyclic version of arginine biosynthesis: the synthesis of N-acetylglutamate from glutamate and acetyl-CoA as the acetyl donor, and of ornithine by transacetylation between N(2)-acetylornithine and glutamate.</text>
</comment>
<comment type="catalytic activity">
    <reaction evidence="1">
        <text>N(2)-acetyl-L-ornithine + L-glutamate = N-acetyl-L-glutamate + L-ornithine</text>
        <dbReference type="Rhea" id="RHEA:15349"/>
        <dbReference type="ChEBI" id="CHEBI:29985"/>
        <dbReference type="ChEBI" id="CHEBI:44337"/>
        <dbReference type="ChEBI" id="CHEBI:46911"/>
        <dbReference type="ChEBI" id="CHEBI:57805"/>
        <dbReference type="EC" id="2.3.1.35"/>
    </reaction>
</comment>
<comment type="catalytic activity">
    <reaction evidence="1">
        <text>L-glutamate + acetyl-CoA = N-acetyl-L-glutamate + CoA + H(+)</text>
        <dbReference type="Rhea" id="RHEA:24292"/>
        <dbReference type="ChEBI" id="CHEBI:15378"/>
        <dbReference type="ChEBI" id="CHEBI:29985"/>
        <dbReference type="ChEBI" id="CHEBI:44337"/>
        <dbReference type="ChEBI" id="CHEBI:57287"/>
        <dbReference type="ChEBI" id="CHEBI:57288"/>
        <dbReference type="EC" id="2.3.1.1"/>
    </reaction>
</comment>
<comment type="pathway">
    <text evidence="1">Amino-acid biosynthesis; L-arginine biosynthesis; L-ornithine and N-acetyl-L-glutamate from L-glutamate and N(2)-acetyl-L-ornithine (cyclic): step 1/1.</text>
</comment>
<comment type="pathway">
    <text evidence="1">Amino-acid biosynthesis; L-arginine biosynthesis; N(2)-acetyl-L-ornithine from L-glutamate: step 1/4.</text>
</comment>
<comment type="subunit">
    <text evidence="1">Heterotetramer of two alpha and two beta chains.</text>
</comment>
<comment type="subcellular location">
    <subcellularLocation>
        <location evidence="1">Cytoplasm</location>
    </subcellularLocation>
</comment>
<comment type="similarity">
    <text evidence="1">Belongs to the ArgJ family.</text>
</comment>
<evidence type="ECO:0000255" key="1">
    <source>
        <dbReference type="HAMAP-Rule" id="MF_01106"/>
    </source>
</evidence>
<feature type="chain" id="PRO_0000227250" description="Arginine biosynthesis bifunctional protein ArgJ alpha chain" evidence="1">
    <location>
        <begin position="1"/>
        <end position="188"/>
    </location>
</feature>
<feature type="chain" id="PRO_0000227251" description="Arginine biosynthesis bifunctional protein ArgJ beta chain" evidence="1">
    <location>
        <begin position="189"/>
        <end position="405"/>
    </location>
</feature>
<feature type="active site" description="Nucleophile" evidence="1">
    <location>
        <position position="189"/>
    </location>
</feature>
<feature type="binding site" evidence="1">
    <location>
        <position position="152"/>
    </location>
    <ligand>
        <name>substrate</name>
    </ligand>
</feature>
<feature type="binding site" evidence="1">
    <location>
        <position position="178"/>
    </location>
    <ligand>
        <name>substrate</name>
    </ligand>
</feature>
<feature type="binding site" evidence="1">
    <location>
        <position position="189"/>
    </location>
    <ligand>
        <name>substrate</name>
    </ligand>
</feature>
<feature type="binding site" evidence="1">
    <location>
        <position position="276"/>
    </location>
    <ligand>
        <name>substrate</name>
    </ligand>
</feature>
<feature type="binding site" evidence="1">
    <location>
        <position position="400"/>
    </location>
    <ligand>
        <name>substrate</name>
    </ligand>
</feature>
<feature type="binding site" evidence="1">
    <location>
        <position position="405"/>
    </location>
    <ligand>
        <name>substrate</name>
    </ligand>
</feature>
<feature type="site" description="Involved in the stabilization of negative charge on the oxyanion by the formation of the oxyanion hole" evidence="1">
    <location>
        <position position="115"/>
    </location>
</feature>
<feature type="site" description="Involved in the stabilization of negative charge on the oxyanion by the formation of the oxyanion hole" evidence="1">
    <location>
        <position position="116"/>
    </location>
</feature>
<feature type="site" description="Cleavage; by autolysis" evidence="1">
    <location>
        <begin position="188"/>
        <end position="189"/>
    </location>
</feature>
<protein>
    <recommendedName>
        <fullName evidence="1">Arginine biosynthesis bifunctional protein ArgJ</fullName>
    </recommendedName>
    <domain>
        <recommendedName>
            <fullName evidence="1">Glutamate N-acetyltransferase</fullName>
            <ecNumber evidence="1">2.3.1.35</ecNumber>
        </recommendedName>
        <alternativeName>
            <fullName evidence="1">Ornithine acetyltransferase</fullName>
            <shortName evidence="1">OATase</shortName>
        </alternativeName>
        <alternativeName>
            <fullName evidence="1">Ornithine transacetylase</fullName>
        </alternativeName>
    </domain>
    <domain>
        <recommendedName>
            <fullName evidence="1">Amino-acid acetyltransferase</fullName>
            <ecNumber evidence="1">2.3.1.1</ecNumber>
        </recommendedName>
        <alternativeName>
            <fullName evidence="1">N-acetylglutamate synthase</fullName>
            <shortName evidence="1">AGSase</shortName>
        </alternativeName>
    </domain>
    <component>
        <recommendedName>
            <fullName evidence="1">Arginine biosynthesis bifunctional protein ArgJ alpha chain</fullName>
        </recommendedName>
    </component>
    <component>
        <recommendedName>
            <fullName evidence="1">Arginine biosynthesis bifunctional protein ArgJ beta chain</fullName>
        </recommendedName>
    </component>
</protein>
<dbReference type="EC" id="2.3.1.35" evidence="1"/>
<dbReference type="EC" id="2.3.1.1" evidence="1"/>
<dbReference type="EMBL" id="CP000058">
    <property type="protein sequence ID" value="AAZ34833.1"/>
    <property type="molecule type" value="Genomic_DNA"/>
</dbReference>
<dbReference type="RefSeq" id="WP_011169424.1">
    <property type="nucleotide sequence ID" value="NC_005773.3"/>
</dbReference>
<dbReference type="SMR" id="Q48EG7"/>
<dbReference type="MEROPS" id="T05.001"/>
<dbReference type="KEGG" id="psp:PSPPH_4099"/>
<dbReference type="eggNOG" id="COG1364">
    <property type="taxonomic scope" value="Bacteria"/>
</dbReference>
<dbReference type="HOGENOM" id="CLU_027172_1_0_6"/>
<dbReference type="UniPathway" id="UPA00068">
    <property type="reaction ID" value="UER00106"/>
</dbReference>
<dbReference type="UniPathway" id="UPA00068">
    <property type="reaction ID" value="UER00111"/>
</dbReference>
<dbReference type="Proteomes" id="UP000000551">
    <property type="component" value="Chromosome"/>
</dbReference>
<dbReference type="GO" id="GO:0005737">
    <property type="term" value="C:cytoplasm"/>
    <property type="evidence" value="ECO:0007669"/>
    <property type="project" value="UniProtKB-SubCell"/>
</dbReference>
<dbReference type="GO" id="GO:0004358">
    <property type="term" value="F:glutamate N-acetyltransferase activity"/>
    <property type="evidence" value="ECO:0007669"/>
    <property type="project" value="UniProtKB-UniRule"/>
</dbReference>
<dbReference type="GO" id="GO:0004042">
    <property type="term" value="F:L-glutamate N-acetyltransferase activity"/>
    <property type="evidence" value="ECO:0007669"/>
    <property type="project" value="UniProtKB-UniRule"/>
</dbReference>
<dbReference type="GO" id="GO:0006526">
    <property type="term" value="P:L-arginine biosynthetic process"/>
    <property type="evidence" value="ECO:0007669"/>
    <property type="project" value="UniProtKB-UniRule"/>
</dbReference>
<dbReference type="GO" id="GO:0006592">
    <property type="term" value="P:ornithine biosynthetic process"/>
    <property type="evidence" value="ECO:0007669"/>
    <property type="project" value="TreeGrafter"/>
</dbReference>
<dbReference type="CDD" id="cd02152">
    <property type="entry name" value="OAT"/>
    <property type="match status" value="1"/>
</dbReference>
<dbReference type="FunFam" id="3.10.20.340:FF:000001">
    <property type="entry name" value="Arginine biosynthesis bifunctional protein ArgJ, chloroplastic"/>
    <property type="match status" value="1"/>
</dbReference>
<dbReference type="FunFam" id="3.60.70.12:FF:000001">
    <property type="entry name" value="Arginine biosynthesis bifunctional protein ArgJ, chloroplastic"/>
    <property type="match status" value="1"/>
</dbReference>
<dbReference type="Gene3D" id="3.10.20.340">
    <property type="entry name" value="ArgJ beta chain, C-terminal domain"/>
    <property type="match status" value="1"/>
</dbReference>
<dbReference type="Gene3D" id="3.60.70.12">
    <property type="entry name" value="L-amino peptidase D-ALA esterase/amidase"/>
    <property type="match status" value="1"/>
</dbReference>
<dbReference type="HAMAP" id="MF_01106">
    <property type="entry name" value="ArgJ"/>
    <property type="match status" value="1"/>
</dbReference>
<dbReference type="InterPro" id="IPR002813">
    <property type="entry name" value="Arg_biosynth_ArgJ"/>
</dbReference>
<dbReference type="InterPro" id="IPR016117">
    <property type="entry name" value="ArgJ-like_dom_sf"/>
</dbReference>
<dbReference type="InterPro" id="IPR042195">
    <property type="entry name" value="ArgJ_beta_C"/>
</dbReference>
<dbReference type="NCBIfam" id="TIGR00120">
    <property type="entry name" value="ArgJ"/>
    <property type="match status" value="1"/>
</dbReference>
<dbReference type="NCBIfam" id="NF003802">
    <property type="entry name" value="PRK05388.1"/>
    <property type="match status" value="1"/>
</dbReference>
<dbReference type="PANTHER" id="PTHR23100">
    <property type="entry name" value="ARGININE BIOSYNTHESIS BIFUNCTIONAL PROTEIN ARGJ"/>
    <property type="match status" value="1"/>
</dbReference>
<dbReference type="PANTHER" id="PTHR23100:SF0">
    <property type="entry name" value="ARGININE BIOSYNTHESIS BIFUNCTIONAL PROTEIN ARGJ, MITOCHONDRIAL"/>
    <property type="match status" value="1"/>
</dbReference>
<dbReference type="Pfam" id="PF01960">
    <property type="entry name" value="ArgJ"/>
    <property type="match status" value="1"/>
</dbReference>
<dbReference type="SUPFAM" id="SSF56266">
    <property type="entry name" value="DmpA/ArgJ-like"/>
    <property type="match status" value="1"/>
</dbReference>
<name>ARGJ_PSE14</name>
<proteinExistence type="inferred from homology"/>
<accession>Q48EG7</accession>
<organism>
    <name type="scientific">Pseudomonas savastanoi pv. phaseolicola (strain 1448A / Race 6)</name>
    <name type="common">Pseudomonas syringae pv. phaseolicola (strain 1448A / Race 6)</name>
    <dbReference type="NCBI Taxonomy" id="264730"/>
    <lineage>
        <taxon>Bacteria</taxon>
        <taxon>Pseudomonadati</taxon>
        <taxon>Pseudomonadota</taxon>
        <taxon>Gammaproteobacteria</taxon>
        <taxon>Pseudomonadales</taxon>
        <taxon>Pseudomonadaceae</taxon>
        <taxon>Pseudomonas</taxon>
    </lineage>
</organism>
<reference key="1">
    <citation type="journal article" date="2005" name="J. Bacteriol.">
        <title>Whole-genome sequence analysis of Pseudomonas syringae pv. phaseolicola 1448A reveals divergence among pathovars in genes involved in virulence and transposition.</title>
        <authorList>
            <person name="Joardar V."/>
            <person name="Lindeberg M."/>
            <person name="Jackson R.W."/>
            <person name="Selengut J."/>
            <person name="Dodson R."/>
            <person name="Brinkac L.M."/>
            <person name="Daugherty S.C."/>
            <person name="DeBoy R.T."/>
            <person name="Durkin A.S."/>
            <person name="Gwinn Giglio M."/>
            <person name="Madupu R."/>
            <person name="Nelson W.C."/>
            <person name="Rosovitz M.J."/>
            <person name="Sullivan S.A."/>
            <person name="Crabtree J."/>
            <person name="Creasy T."/>
            <person name="Davidsen T.M."/>
            <person name="Haft D.H."/>
            <person name="Zafar N."/>
            <person name="Zhou L."/>
            <person name="Halpin R."/>
            <person name="Holley T."/>
            <person name="Khouri H.M."/>
            <person name="Feldblyum T.V."/>
            <person name="White O."/>
            <person name="Fraser C.M."/>
            <person name="Chatterjee A.K."/>
            <person name="Cartinhour S."/>
            <person name="Schneider D."/>
            <person name="Mansfield J.W."/>
            <person name="Collmer A."/>
            <person name="Buell R."/>
        </authorList>
    </citation>
    <scope>NUCLEOTIDE SEQUENCE [LARGE SCALE GENOMIC DNA]</scope>
    <source>
        <strain>1448A / Race 6</strain>
    </source>
</reference>
<sequence length="405" mass="42336">MAVGLGPLPALHPVPGFELGISSAGIKRPGRKDVVVMRCAEGSSVAGVFTLNAFCAAPVILAKQRVQGTVRYLLTNTGNANAGTGEPGLVAARRTCEKLAQLTGVDASAVLPYSTGVIGEPLPVEKIEGALQAALDDLSVDNWAAAATGIMTTDTLPKGASRQFTHDGVTITVTGISKGAGMIRPNMATMLGYIATDAKVSQSVLQDLIRDGANKSFNRITIDGDTSTNDCCMLIATGQADLPEITEAKGPLFDALKKAVFDVCMDVAQAIVRDGEGATKFVTVEVNGGGNQQECLDVGYAVAHSPLIKTALFASDPNWGRILAAVGRAGVPDLDVSKIDVFLGGVCIASQGCRATTYTEEQGSAVMAEEEITIRIELGRGDCSETIWTTDLSHEYVKINAEYRT</sequence>
<gene>
    <name evidence="1" type="primary">argJ</name>
    <name type="ordered locus">PSPPH_4099</name>
</gene>